<keyword id="KW-0067">ATP-binding</keyword>
<keyword id="KW-0227">DNA damage</keyword>
<keyword id="KW-0234">DNA repair</keyword>
<keyword id="KW-0238">DNA-binding</keyword>
<keyword id="KW-0547">Nucleotide-binding</keyword>
<keyword id="KW-0539">Nucleus</keyword>
<keyword id="KW-1185">Reference proteome</keyword>
<accession>Q9SMV7</accession>
<accession>O22372</accession>
<accession>Q9SNZ4</accession>
<protein>
    <recommendedName>
        <fullName>DNA mismatch repair protein MSH7</fullName>
        <shortName>AtMSH7</shortName>
    </recommendedName>
    <alternativeName>
        <fullName>MutS protein homolog 7</fullName>
    </alternativeName>
</protein>
<evidence type="ECO:0000255" key="1"/>
<evidence type="ECO:0000256" key="2">
    <source>
        <dbReference type="SAM" id="MobiDB-lite"/>
    </source>
</evidence>
<evidence type="ECO:0000269" key="3">
    <source>
    </source>
</evidence>
<evidence type="ECO:0000269" key="4">
    <source>
    </source>
</evidence>
<evidence type="ECO:0000305" key="5"/>
<proteinExistence type="evidence at protein level"/>
<reference key="1">
    <citation type="journal article" date="1999" name="Mol. Gen. Genet.">
        <title>Four mismatch repair paralogues coexist in Arabidopsis thaliana: AtMSH2, AtMSH3, AtMSH6-1 and AtMSH6-2.</title>
        <authorList>
            <person name="Ade J."/>
            <person name="Belzile F."/>
            <person name="Philippe H."/>
            <person name="Doutriaux M.P."/>
        </authorList>
    </citation>
    <scope>NUCLEOTIDE SEQUENCE [GENOMIC DNA]</scope>
    <source>
        <strain>cv. Columbia</strain>
    </source>
</reference>
<reference key="2">
    <citation type="journal article" date="2000" name="Plant Cell">
        <title>Arabidopsis MutS homologs-AtMSH2, AtMSH3, AtMSH6, and a novel AtMSH7-form three distinct protein heterodimers with different specificities for mismatched DNA.</title>
        <authorList>
            <person name="Culligan K.M."/>
            <person name="Hays J.B."/>
        </authorList>
    </citation>
    <scope>NUCLEOTIDE SEQUENCE [MRNA]</scope>
    <scope>FUNCTION</scope>
    <scope>INTERACTION WITH MSH2</scope>
    <source>
        <strain>cv. Columbia</strain>
    </source>
</reference>
<reference key="3">
    <citation type="journal article" date="2000" name="DNA Res.">
        <title>Structural analysis of Arabidopsis thaliana chromosome 3. II. Sequence features of the 4,251,695 bp regions covered by 90 P1, TAC and BAC clones.</title>
        <authorList>
            <person name="Kaneko T."/>
            <person name="Katoh T."/>
            <person name="Sato S."/>
            <person name="Nakamura Y."/>
            <person name="Asamizu E."/>
            <person name="Tabata S."/>
        </authorList>
    </citation>
    <scope>NUCLEOTIDE SEQUENCE [LARGE SCALE GENOMIC DNA]</scope>
    <source>
        <strain>cv. Columbia</strain>
    </source>
</reference>
<reference key="4">
    <citation type="journal article" date="2017" name="Plant J.">
        <title>Araport11: a complete reannotation of the Arabidopsis thaliana reference genome.</title>
        <authorList>
            <person name="Cheng C.Y."/>
            <person name="Krishnakumar V."/>
            <person name="Chan A.P."/>
            <person name="Thibaud-Nissen F."/>
            <person name="Schobel S."/>
            <person name="Town C.D."/>
        </authorList>
    </citation>
    <scope>GENOME REANNOTATION</scope>
    <source>
        <strain>cv. Columbia</strain>
    </source>
</reference>
<reference key="5">
    <citation type="journal article" date="1997" name="Plant Physiol.">
        <title>DNA mismatch repair in plants. An Arabidopsis thaliana gene that predicts a protein belonging to the MSH2 subfamily of eukaryotic MutS homologs.</title>
        <authorList>
            <person name="Culligan K.M."/>
            <person name="Hays J.B."/>
        </authorList>
    </citation>
    <scope>NUCLEOTIDE SEQUENCE [MRNA] OF 852-937</scope>
    <source>
        <strain>cv. Columbia</strain>
    </source>
</reference>
<reference key="6">
    <citation type="journal article" date="2003" name="Nucleic Acids Res.">
        <title>Dissimilar mispair-recognition spectra of Arabidopsis DNA-mismatch-repair proteins MSH2*MSH6 (MutSalpha) and MSH2*MSH7 (MutSgamma).</title>
        <authorList>
            <person name="Wu S.Y."/>
            <person name="Culligan K."/>
            <person name="Lamers M."/>
            <person name="Hays J."/>
        </authorList>
    </citation>
    <scope>FUNCTION</scope>
    <scope>INTERACTION WITH MSH2</scope>
</reference>
<name>MSH7_ARATH</name>
<comment type="function">
    <text evidence="3 4">Component of the post-replicative DNA mismatch repair system (MMR). Forms the heterodimer MutS gamma (MSH2-MSH7 heterodimer) which binds to DNA mismatches thereby initiating DNA repair. MutS gamma recognizes specifically the T/G single base mismatch, but not trinucleotide insertion-deletion loops (IDL).</text>
</comment>
<comment type="subunit">
    <text>Heterodimer consisting of MSH2-MSH7 (MutS gamma).</text>
</comment>
<comment type="subcellular location">
    <subcellularLocation>
        <location evidence="5">Nucleus</location>
    </subcellularLocation>
</comment>
<comment type="similarity">
    <text evidence="5">Belongs to the DNA mismatch repair MutS family.</text>
</comment>
<feature type="chain" id="PRO_0000115211" description="DNA mismatch repair protein MSH7">
    <location>
        <begin position="1"/>
        <end position="1109"/>
    </location>
</feature>
<feature type="region of interest" description="Disordered" evidence="2">
    <location>
        <begin position="19"/>
        <end position="45"/>
    </location>
</feature>
<feature type="region of interest" description="Disordered" evidence="2">
    <location>
        <begin position="61"/>
        <end position="86"/>
    </location>
</feature>
<feature type="compositionally biased region" description="Basic and acidic residues" evidence="2">
    <location>
        <begin position="61"/>
        <end position="74"/>
    </location>
</feature>
<feature type="binding site" evidence="1">
    <location>
        <begin position="853"/>
        <end position="860"/>
    </location>
    <ligand>
        <name>ATP</name>
        <dbReference type="ChEBI" id="CHEBI:30616"/>
    </ligand>
</feature>
<feature type="sequence conflict" description="In Ref. 2; AAF06013." evidence="5" ref="2">
    <original>GPSGTLY</original>
    <variation>VLQGPLN</variation>
    <location>
        <begin position="573"/>
        <end position="579"/>
    </location>
</feature>
<feature type="sequence conflict" description="In Ref. 2; AAF06013." evidence="5" ref="2">
    <original>D</original>
    <variation>E</variation>
    <location>
        <position position="583"/>
    </location>
</feature>
<gene>
    <name type="primary">MSH7</name>
    <name type="synonym">MSH6-2</name>
    <name type="ordered locus">At3g24495</name>
    <name type="ORF">MOB24.2</name>
</gene>
<dbReference type="EMBL" id="AJ007792">
    <property type="protein sequence ID" value="CAA07685.1"/>
    <property type="molecule type" value="Genomic_DNA"/>
</dbReference>
<dbReference type="EMBL" id="AF193018">
    <property type="protein sequence ID" value="AAF06013.1"/>
    <property type="molecule type" value="mRNA"/>
</dbReference>
<dbReference type="EMBL" id="AB020746">
    <property type="protein sequence ID" value="BAB01996.1"/>
    <property type="molecule type" value="Genomic_DNA"/>
</dbReference>
<dbReference type="EMBL" id="CP002686">
    <property type="protein sequence ID" value="AEE76904.1"/>
    <property type="molecule type" value="Genomic_DNA"/>
</dbReference>
<dbReference type="EMBL" id="AF009657">
    <property type="protein sequence ID" value="AAB82654.1"/>
    <property type="molecule type" value="mRNA"/>
</dbReference>
<dbReference type="RefSeq" id="NP_850630.1">
    <property type="nucleotide sequence ID" value="NM_180299.1"/>
</dbReference>
<dbReference type="SMR" id="Q9SMV7"/>
<dbReference type="BioGRID" id="7371">
    <property type="interactions" value="1"/>
</dbReference>
<dbReference type="FunCoup" id="Q9SMV7">
    <property type="interactions" value="140"/>
</dbReference>
<dbReference type="STRING" id="3702.Q9SMV7"/>
<dbReference type="iPTMnet" id="Q9SMV7"/>
<dbReference type="PaxDb" id="3702-AT3G24495.1"/>
<dbReference type="ProteomicsDB" id="250779"/>
<dbReference type="EnsemblPlants" id="AT3G24495.1">
    <property type="protein sequence ID" value="AT3G24495.1"/>
    <property type="gene ID" value="AT3G24495"/>
</dbReference>
<dbReference type="GeneID" id="822040"/>
<dbReference type="Gramene" id="AT3G24495.1">
    <property type="protein sequence ID" value="AT3G24495.1"/>
    <property type="gene ID" value="AT3G24495"/>
</dbReference>
<dbReference type="KEGG" id="ath:AT3G24495"/>
<dbReference type="Araport" id="AT3G24495"/>
<dbReference type="TAIR" id="AT3G24495">
    <property type="gene designation" value="MSH7"/>
</dbReference>
<dbReference type="eggNOG" id="KOG0217">
    <property type="taxonomic scope" value="Eukaryota"/>
</dbReference>
<dbReference type="HOGENOM" id="CLU_002472_5_0_1"/>
<dbReference type="InParanoid" id="Q9SMV7"/>
<dbReference type="OMA" id="EWSEVIH"/>
<dbReference type="PhylomeDB" id="Q9SMV7"/>
<dbReference type="PRO" id="PR:Q9SMV7"/>
<dbReference type="Proteomes" id="UP000006548">
    <property type="component" value="Chromosome 3"/>
</dbReference>
<dbReference type="ExpressionAtlas" id="Q9SMV7">
    <property type="expression patterns" value="baseline and differential"/>
</dbReference>
<dbReference type="GO" id="GO:0005634">
    <property type="term" value="C:nucleus"/>
    <property type="evidence" value="ECO:0007669"/>
    <property type="project" value="UniProtKB-SubCell"/>
</dbReference>
<dbReference type="GO" id="GO:0005524">
    <property type="term" value="F:ATP binding"/>
    <property type="evidence" value="ECO:0007669"/>
    <property type="project" value="UniProtKB-KW"/>
</dbReference>
<dbReference type="GO" id="GO:0140664">
    <property type="term" value="F:ATP-dependent DNA damage sensor activity"/>
    <property type="evidence" value="ECO:0007669"/>
    <property type="project" value="InterPro"/>
</dbReference>
<dbReference type="GO" id="GO:0030983">
    <property type="term" value="F:mismatched DNA binding"/>
    <property type="evidence" value="ECO:0007669"/>
    <property type="project" value="InterPro"/>
</dbReference>
<dbReference type="GO" id="GO:0006298">
    <property type="term" value="P:mismatch repair"/>
    <property type="evidence" value="ECO:0007669"/>
    <property type="project" value="InterPro"/>
</dbReference>
<dbReference type="CDD" id="cd03286">
    <property type="entry name" value="ABC_MSH6_euk"/>
    <property type="match status" value="1"/>
</dbReference>
<dbReference type="FunFam" id="1.10.1420.10:FF:000023">
    <property type="entry name" value="DNA mismatch repair protein"/>
    <property type="match status" value="1"/>
</dbReference>
<dbReference type="FunFam" id="3.30.420.110:FF:000011">
    <property type="entry name" value="DNA mismatch repair protein"/>
    <property type="match status" value="1"/>
</dbReference>
<dbReference type="FunFam" id="3.40.50.300:FF:001335">
    <property type="entry name" value="DNA mismatch repair protein"/>
    <property type="match status" value="1"/>
</dbReference>
<dbReference type="Gene3D" id="1.10.1420.10">
    <property type="match status" value="1"/>
</dbReference>
<dbReference type="Gene3D" id="3.40.1170.10">
    <property type="entry name" value="DNA repair protein MutS, domain I"/>
    <property type="match status" value="1"/>
</dbReference>
<dbReference type="Gene3D" id="3.30.420.110">
    <property type="entry name" value="MutS, connector domain"/>
    <property type="match status" value="1"/>
</dbReference>
<dbReference type="Gene3D" id="3.40.50.300">
    <property type="entry name" value="P-loop containing nucleotide triphosphate hydrolases"/>
    <property type="match status" value="1"/>
</dbReference>
<dbReference type="InterPro" id="IPR007695">
    <property type="entry name" value="DNA_mismatch_repair_MutS-lik_N"/>
</dbReference>
<dbReference type="InterPro" id="IPR000432">
    <property type="entry name" value="DNA_mismatch_repair_MutS_C"/>
</dbReference>
<dbReference type="InterPro" id="IPR007696">
    <property type="entry name" value="DNA_mismatch_repair_MutS_core"/>
</dbReference>
<dbReference type="InterPro" id="IPR016151">
    <property type="entry name" value="DNA_mismatch_repair_MutS_N"/>
</dbReference>
<dbReference type="InterPro" id="IPR036187">
    <property type="entry name" value="DNA_mismatch_repair_MutS_sf"/>
</dbReference>
<dbReference type="InterPro" id="IPR007860">
    <property type="entry name" value="DNA_mmatch_repair_MutS_con_dom"/>
</dbReference>
<dbReference type="InterPro" id="IPR045076">
    <property type="entry name" value="MutS"/>
</dbReference>
<dbReference type="InterPro" id="IPR036678">
    <property type="entry name" value="MutS_con_dom_sf"/>
</dbReference>
<dbReference type="InterPro" id="IPR027417">
    <property type="entry name" value="P-loop_NTPase"/>
</dbReference>
<dbReference type="PANTHER" id="PTHR11361:SF148">
    <property type="entry name" value="DNA MISMATCH REPAIR PROTEIN MSH6"/>
    <property type="match status" value="1"/>
</dbReference>
<dbReference type="PANTHER" id="PTHR11361">
    <property type="entry name" value="DNA MISMATCH REPAIR PROTEIN MUTS FAMILY MEMBER"/>
    <property type="match status" value="1"/>
</dbReference>
<dbReference type="Pfam" id="PF01624">
    <property type="entry name" value="MutS_I"/>
    <property type="match status" value="1"/>
</dbReference>
<dbReference type="Pfam" id="PF05188">
    <property type="entry name" value="MutS_II"/>
    <property type="match status" value="1"/>
</dbReference>
<dbReference type="Pfam" id="PF05192">
    <property type="entry name" value="MutS_III"/>
    <property type="match status" value="1"/>
</dbReference>
<dbReference type="Pfam" id="PF00488">
    <property type="entry name" value="MutS_V"/>
    <property type="match status" value="1"/>
</dbReference>
<dbReference type="SMART" id="SM00534">
    <property type="entry name" value="MUTSac"/>
    <property type="match status" value="1"/>
</dbReference>
<dbReference type="SMART" id="SM00533">
    <property type="entry name" value="MUTSd"/>
    <property type="match status" value="1"/>
</dbReference>
<dbReference type="SUPFAM" id="SSF55271">
    <property type="entry name" value="DNA repair protein MutS, domain I"/>
    <property type="match status" value="1"/>
</dbReference>
<dbReference type="SUPFAM" id="SSF53150">
    <property type="entry name" value="DNA repair protein MutS, domain II"/>
    <property type="match status" value="1"/>
</dbReference>
<dbReference type="SUPFAM" id="SSF48334">
    <property type="entry name" value="DNA repair protein MutS, domain III"/>
    <property type="match status" value="1"/>
</dbReference>
<dbReference type="SUPFAM" id="SSF52540">
    <property type="entry name" value="P-loop containing nucleoside triphosphate hydrolases"/>
    <property type="match status" value="1"/>
</dbReference>
<dbReference type="PROSITE" id="PS00486">
    <property type="entry name" value="DNA_MISMATCH_REPAIR_2"/>
    <property type="match status" value="1"/>
</dbReference>
<organism>
    <name type="scientific">Arabidopsis thaliana</name>
    <name type="common">Mouse-ear cress</name>
    <dbReference type="NCBI Taxonomy" id="3702"/>
    <lineage>
        <taxon>Eukaryota</taxon>
        <taxon>Viridiplantae</taxon>
        <taxon>Streptophyta</taxon>
        <taxon>Embryophyta</taxon>
        <taxon>Tracheophyta</taxon>
        <taxon>Spermatophyta</taxon>
        <taxon>Magnoliopsida</taxon>
        <taxon>eudicotyledons</taxon>
        <taxon>Gunneridae</taxon>
        <taxon>Pentapetalae</taxon>
        <taxon>rosids</taxon>
        <taxon>malvids</taxon>
        <taxon>Brassicales</taxon>
        <taxon>Brassicaceae</taxon>
        <taxon>Camelineae</taxon>
        <taxon>Arabidopsis</taxon>
    </lineage>
</organism>
<sequence length="1109" mass="122270">MQRQRSILSFFQKPTAATTKGLVSGDAASGGGGSGGPRFNVKEGDAKGDASVRFAVSKSVDEVRGTDTPPEKVPRRVLPSGFKPAESAGDASSLFSNIMHKFVKVDDRDCSGERSREDVVPLNDSSLCMKANDVIPQFRSNNGKTQERNHAFSFSGRAELRSVEDIGVDGDVPGPETPGMRPRASRLKRVLEDEMTFKEDKVPVLDSNKRLKMLQDPVCGEKKEVNEGTKFEWLESSRIRDANRRRPDDPLYDRKTLHIPPDVFKKMSASQKQYWSVKSEYMDIVLFFKVGKFYELYELDAELGHKELDWKMTMSGVGKCRQVGISESGIDEAVQKLLARGYKVGRIEQLETSDQAKARGANTIIPRKLVQVLTPSTASEGNIGPDAVHLLAIKEIKMELQKCSTVYGFAFVDCAALRFWVGSISDDASCAALGALLMQVSPKEVLYDSKGLSREAQKALRKYTLTGSTAVQLAPVPQVMGDTDAAGVRNIIESNGYFKGSSESWNCAVDGLNECDVALSALGELINHLSRLKLEDVLKHGDIFPYQVYRGCLRIDGQTMVNLEIFNNSCDGGPSGTLYKYLDNCVSPTGKRLLRNWICHPLKDVESINKRLDVVEEFTANSESMQITGQYLHKLPDLERLLGRIKSSVRSSASVLPALLGKKVLKQRVKAFGQIVKGFRSGIDLLLALQKESNMMSLLYKLCKLPILVGKSGLELFLSQFEAAIDSDFPNYQNQDVTDENAETLTILIELFIERATQWSEVIHTISCLDVLRSFAIAASLSAGSMARPVIFPESEATDQNQKTKGPILKIQGLWHPFAVAADGQLPVPNDILLGEARRSSGSIHPRSLLLTGPNMGGKSTLLRATCLAVIFAQLGCYVPCESCEISLVDTIFTRLGASDRIMTGESTFLVECTETASVLQNATQDSLVILDELGRGTSTFDGYAIAYSVFRHLVEKVQCRMLFATHYHPLTKEFASHPRVTSKHMACAFKSRSDYQPRGCDQDLVFLYRLTEGACPESYGLQVALMAGIPNQVVETASGAAQAMKRSIGENFKSSELRSEFSSLHEDWLKSLVGISRVAHNNAPIGEDDYDTLFCLWHEIKSSYCVPK</sequence>